<comment type="function">
    <text evidence="1">Involved in viral genome packaging through its interaction with packaging proteins 1 and 2. After proteolytic cleavage by adenovirus protease, L1 52/55k protein is removed from the capsid during viral maturation.</text>
</comment>
<comment type="subunit">
    <text evidence="1">Part of the genome packaging complex composed of packaging proteins 1, 2 and 3; this complex specifically binds to the packaging sequence on the left end of viral genomic DNA and performs packaging of the viral genome. Interacts with hexon-linking protein IIIa; this interaction is required to promote correct genome packaging.</text>
</comment>
<comment type="subcellular location">
    <subcellularLocation>
        <location evidence="1">Host nucleus</location>
    </subcellularLocation>
    <text evidence="1">Nuclear protein present in empty capsids and assembly intermediates.</text>
</comment>
<comment type="induction">
    <text evidence="1">Expressed in the early phase and late phase of the viral replicative cycle.</text>
</comment>
<comment type="PTM">
    <text evidence="1">Cleaved at different sites by the viral protease during virion maturation.</text>
</comment>
<comment type="miscellaneous">
    <text evidence="1">All late proteins expressed from the major late promoter are produced by alternative splicing and alternative polyadenylation of the same gene giving rise to non-overlapping ORFs. A leader sequence is present in the N-terminus of all these mRNAs and is recognized by the viral shutoff protein to provide expression although conventional translation via ribosome scanning from the cap has been shut off in the host cell.</text>
</comment>
<comment type="similarity">
    <text evidence="1">Belongs to the adenoviridae packaging protein 3 family.</text>
</comment>
<organismHost>
    <name type="scientific">Galliformes</name>
    <dbReference type="NCBI Taxonomy" id="8976"/>
</organismHost>
<protein>
    <recommendedName>
        <fullName evidence="1">Packaging protein 3</fullName>
    </recommendedName>
    <alternativeName>
        <fullName evidence="1">L1-52/55 kDa protein</fullName>
    </alternativeName>
    <alternativeName>
        <fullName evidence="1">Packaging protein 52K</fullName>
    </alternativeName>
</protein>
<accession>Q64753</accession>
<proteinExistence type="inferred from homology"/>
<organism>
    <name type="scientific">Fowl adenovirus A serotype 1 (strain CELO / Phelps)</name>
    <name type="common">FAdV-1</name>
    <name type="synonym">Avian adenovirus gal1 (strain Phelps)</name>
    <dbReference type="NCBI Taxonomy" id="10553"/>
    <lineage>
        <taxon>Viruses</taxon>
        <taxon>Varidnaviria</taxon>
        <taxon>Bamfordvirae</taxon>
        <taxon>Preplasmiviricota</taxon>
        <taxon>Tectiliviricetes</taxon>
        <taxon>Rowavirales</taxon>
        <taxon>Adenoviridae</taxon>
        <taxon>Aviadenovirus</taxon>
        <taxon>Fowl aviadenovirus A</taxon>
    </lineage>
</organism>
<dbReference type="EMBL" id="U46933">
    <property type="protein sequence ID" value="AAC54906.1"/>
    <property type="molecule type" value="Genomic_DNA"/>
</dbReference>
<dbReference type="RefSeq" id="NP_043880.1">
    <property type="nucleotide sequence ID" value="NC_001720.1"/>
</dbReference>
<dbReference type="GeneID" id="1476560"/>
<dbReference type="Proteomes" id="UP000001594">
    <property type="component" value="Segment"/>
</dbReference>
<dbReference type="GO" id="GO:0042025">
    <property type="term" value="C:host cell nucleus"/>
    <property type="evidence" value="ECO:0007669"/>
    <property type="project" value="UniProtKB-SubCell"/>
</dbReference>
<dbReference type="GO" id="GO:0019073">
    <property type="term" value="P:viral DNA genome packaging"/>
    <property type="evidence" value="ECO:0007669"/>
    <property type="project" value="UniProtKB-UniRule"/>
</dbReference>
<dbReference type="GO" id="GO:0019076">
    <property type="term" value="P:viral release from host cell"/>
    <property type="evidence" value="ECO:0007669"/>
    <property type="project" value="UniProtKB-UniRule"/>
</dbReference>
<dbReference type="HAMAP" id="MF_04058">
    <property type="entry name" value="ADV_PKG3"/>
    <property type="match status" value="1"/>
</dbReference>
<dbReference type="InterPro" id="IPR037536">
    <property type="entry name" value="ADV_PKG3"/>
</dbReference>
<dbReference type="InterPro" id="IPR004292">
    <property type="entry name" value="L1-like"/>
</dbReference>
<dbReference type="Pfam" id="PF03052">
    <property type="entry name" value="Adeno_52K"/>
    <property type="match status" value="1"/>
</dbReference>
<feature type="chain" id="PRO_0000221871" description="Packaging protein 3">
    <location>
        <begin position="1"/>
        <end position="378"/>
    </location>
</feature>
<feature type="region of interest" description="Interaction with packaging protein 1" evidence="1">
    <location>
        <begin position="1"/>
        <end position="178"/>
    </location>
</feature>
<feature type="region of interest" description="Disordered" evidence="2">
    <location>
        <begin position="1"/>
        <end position="73"/>
    </location>
</feature>
<feature type="region of interest" description="Disordered" evidence="2">
    <location>
        <begin position="355"/>
        <end position="378"/>
    </location>
</feature>
<feature type="compositionally biased region" description="Low complexity" evidence="2">
    <location>
        <begin position="16"/>
        <end position="35"/>
    </location>
</feature>
<feature type="compositionally biased region" description="Low complexity" evidence="2">
    <location>
        <begin position="49"/>
        <end position="58"/>
    </location>
</feature>
<feature type="compositionally biased region" description="Acidic residues" evidence="2">
    <location>
        <begin position="363"/>
        <end position="378"/>
    </location>
</feature>
<feature type="modified residue" description="Phosphoserine; by host" evidence="1">
    <location>
        <position position="362"/>
    </location>
</feature>
<gene>
    <name evidence="1" type="primary">L1</name>
</gene>
<keyword id="KW-1048">Host nucleus</keyword>
<keyword id="KW-0426">Late protein</keyword>
<keyword id="KW-0597">Phosphoprotein</keyword>
<keyword id="KW-1185">Reference proteome</keyword>
<keyword id="KW-0231">Viral genome packaging</keyword>
<keyword id="KW-1188">Viral release from host cell</keyword>
<name>PKG3_ADEG1</name>
<sequence length="378" mass="42121">MHPVLQSVRNASVSAGGPHQQQPQQQQHGVSSVRRPPSPPRYPAQHAYPGAGATPTAGRGDFDGALDPDEGPVACGLAAGAGVDEVRMRERDAARRATVPEINLFKARRDVVPNGDYERDLMYHSGQAIDIDRQRVLTPEDFKGSEPAFTPAVNHMRAAELKRAAEQTAFGEELRNTCHQTRIRTALLRPEIGAGIYYLYDFVQTYLEHPDGRVKLNPQLVLVAQHAGNTMLAQRLWAIAEEKNAWLRDLIEMAYMIVNDPYLNTEQQLSAICTTVVELSMKYAKLAAKNGYPSMAQMAKAQEFFYRVMQAVLDLGVQVGVYNNRPARYRQKRMSEIPQMTDAEYMFGLTQALESRPPQGESFADEGPSESDDEDDFI</sequence>
<reference key="1">
    <citation type="journal article" date="1996" name="J. Virol.">
        <title>The complete DNA sequence and genomic organization of the avian adenovirus CELO.</title>
        <authorList>
            <person name="Chiocca S."/>
            <person name="Kurzbauer R."/>
            <person name="Schaffner G."/>
            <person name="Baker A."/>
            <person name="Mautner V."/>
            <person name="Cotten M."/>
        </authorList>
    </citation>
    <scope>NUCLEOTIDE SEQUENCE [LARGE SCALE GENOMIC DNA]</scope>
</reference>
<evidence type="ECO:0000255" key="1">
    <source>
        <dbReference type="HAMAP-Rule" id="MF_04058"/>
    </source>
</evidence>
<evidence type="ECO:0000256" key="2">
    <source>
        <dbReference type="SAM" id="MobiDB-lite"/>
    </source>
</evidence>